<name>RL19_MICLC</name>
<evidence type="ECO:0000255" key="1">
    <source>
        <dbReference type="HAMAP-Rule" id="MF_00402"/>
    </source>
</evidence>
<evidence type="ECO:0000305" key="2"/>
<reference key="1">
    <citation type="journal article" date="2010" name="J. Bacteriol.">
        <title>Genome sequence of the Fleming strain of Micrococcus luteus, a simple free-living actinobacterium.</title>
        <authorList>
            <person name="Young M."/>
            <person name="Artsatbanov V."/>
            <person name="Beller H.R."/>
            <person name="Chandra G."/>
            <person name="Chater K.F."/>
            <person name="Dover L.G."/>
            <person name="Goh E.B."/>
            <person name="Kahan T."/>
            <person name="Kaprelyants A.S."/>
            <person name="Kyrpides N."/>
            <person name="Lapidus A."/>
            <person name="Lowry S.R."/>
            <person name="Lykidis A."/>
            <person name="Mahillon J."/>
            <person name="Markowitz V."/>
            <person name="Mavromatis K."/>
            <person name="Mukamolova G.V."/>
            <person name="Oren A."/>
            <person name="Rokem J.S."/>
            <person name="Smith M.C."/>
            <person name="Young D.I."/>
            <person name="Greenblatt C.L."/>
        </authorList>
    </citation>
    <scope>NUCLEOTIDE SEQUENCE [LARGE SCALE GENOMIC DNA]</scope>
    <source>
        <strain>ATCC 4698 / DSM 20030 / JCM 1464 / CCM 169 / CCUG 5858 / IAM 1056 / NBRC 3333 / NCIMB 9278 / NCTC 2665 / VKM Ac-2230</strain>
    </source>
</reference>
<comment type="function">
    <text evidence="1">This protein is located at the 30S-50S ribosomal subunit interface and may play a role in the structure and function of the aminoacyl-tRNA binding site.</text>
</comment>
<comment type="similarity">
    <text evidence="1">Belongs to the bacterial ribosomal protein bL19 family.</text>
</comment>
<dbReference type="EMBL" id="CP001628">
    <property type="protein sequence ID" value="ACS30440.1"/>
    <property type="molecule type" value="Genomic_DNA"/>
</dbReference>
<dbReference type="RefSeq" id="WP_010078917.1">
    <property type="nucleotide sequence ID" value="NC_012803.1"/>
</dbReference>
<dbReference type="SMR" id="C5CAH1"/>
<dbReference type="STRING" id="465515.Mlut_09190"/>
<dbReference type="EnsemblBacteria" id="ACS30440">
    <property type="protein sequence ID" value="ACS30440"/>
    <property type="gene ID" value="Mlut_09190"/>
</dbReference>
<dbReference type="GeneID" id="93345081"/>
<dbReference type="KEGG" id="mlu:Mlut_09190"/>
<dbReference type="PATRIC" id="fig|465515.4.peg.880"/>
<dbReference type="eggNOG" id="COG0335">
    <property type="taxonomic scope" value="Bacteria"/>
</dbReference>
<dbReference type="HOGENOM" id="CLU_103507_2_2_11"/>
<dbReference type="Proteomes" id="UP000000738">
    <property type="component" value="Chromosome"/>
</dbReference>
<dbReference type="GO" id="GO:0022625">
    <property type="term" value="C:cytosolic large ribosomal subunit"/>
    <property type="evidence" value="ECO:0007669"/>
    <property type="project" value="TreeGrafter"/>
</dbReference>
<dbReference type="GO" id="GO:0003735">
    <property type="term" value="F:structural constituent of ribosome"/>
    <property type="evidence" value="ECO:0007669"/>
    <property type="project" value="InterPro"/>
</dbReference>
<dbReference type="GO" id="GO:0006412">
    <property type="term" value="P:translation"/>
    <property type="evidence" value="ECO:0007669"/>
    <property type="project" value="UniProtKB-UniRule"/>
</dbReference>
<dbReference type="FunFam" id="2.30.30.790:FF:000001">
    <property type="entry name" value="50S ribosomal protein L19"/>
    <property type="match status" value="1"/>
</dbReference>
<dbReference type="Gene3D" id="2.30.30.790">
    <property type="match status" value="1"/>
</dbReference>
<dbReference type="HAMAP" id="MF_00402">
    <property type="entry name" value="Ribosomal_bL19"/>
    <property type="match status" value="1"/>
</dbReference>
<dbReference type="InterPro" id="IPR001857">
    <property type="entry name" value="Ribosomal_bL19"/>
</dbReference>
<dbReference type="InterPro" id="IPR018257">
    <property type="entry name" value="Ribosomal_bL19_CS"/>
</dbReference>
<dbReference type="InterPro" id="IPR038657">
    <property type="entry name" value="Ribosomal_bL19_sf"/>
</dbReference>
<dbReference type="InterPro" id="IPR008991">
    <property type="entry name" value="Translation_prot_SH3-like_sf"/>
</dbReference>
<dbReference type="NCBIfam" id="TIGR01024">
    <property type="entry name" value="rplS_bact"/>
    <property type="match status" value="1"/>
</dbReference>
<dbReference type="PANTHER" id="PTHR15680:SF9">
    <property type="entry name" value="LARGE RIBOSOMAL SUBUNIT PROTEIN BL19M"/>
    <property type="match status" value="1"/>
</dbReference>
<dbReference type="PANTHER" id="PTHR15680">
    <property type="entry name" value="RIBOSOMAL PROTEIN L19"/>
    <property type="match status" value="1"/>
</dbReference>
<dbReference type="Pfam" id="PF01245">
    <property type="entry name" value="Ribosomal_L19"/>
    <property type="match status" value="1"/>
</dbReference>
<dbReference type="PIRSF" id="PIRSF002191">
    <property type="entry name" value="Ribosomal_L19"/>
    <property type="match status" value="1"/>
</dbReference>
<dbReference type="PRINTS" id="PR00061">
    <property type="entry name" value="RIBOSOMALL19"/>
</dbReference>
<dbReference type="SUPFAM" id="SSF50104">
    <property type="entry name" value="Translation proteins SH3-like domain"/>
    <property type="match status" value="1"/>
</dbReference>
<dbReference type="PROSITE" id="PS01015">
    <property type="entry name" value="RIBOSOMAL_L19"/>
    <property type="match status" value="1"/>
</dbReference>
<protein>
    <recommendedName>
        <fullName evidence="1">Large ribosomal subunit protein bL19</fullName>
    </recommendedName>
    <alternativeName>
        <fullName evidence="2">50S ribosomal protein L19</fullName>
    </alternativeName>
</protein>
<sequence length="117" mass="13470">MHILDSFDKKTLRDDIPEFAPGDTVKVHVNIIEGKTARVQVFQGYVMGRQGYGVRETFRVRKVSFGIGVERVFPVHSPIIDKIEVVTKGDVRRAKLYYMRDRHGKAARIREKRADAK</sequence>
<keyword id="KW-1185">Reference proteome</keyword>
<keyword id="KW-0687">Ribonucleoprotein</keyword>
<keyword id="KW-0689">Ribosomal protein</keyword>
<gene>
    <name evidence="1" type="primary">rplS</name>
    <name type="ordered locus">Mlut_09190</name>
</gene>
<accession>C5CAH1</accession>
<feature type="chain" id="PRO_1000205896" description="Large ribosomal subunit protein bL19">
    <location>
        <begin position="1"/>
        <end position="117"/>
    </location>
</feature>
<proteinExistence type="inferred from homology"/>
<organism>
    <name type="scientific">Micrococcus luteus (strain ATCC 4698 / DSM 20030 / JCM 1464 / CCM 169 / CCUG 5858 / IAM 1056 / NBRC 3333 / NCIMB 9278 / NCTC 2665 / VKM Ac-2230)</name>
    <name type="common">Micrococcus lysodeikticus</name>
    <dbReference type="NCBI Taxonomy" id="465515"/>
    <lineage>
        <taxon>Bacteria</taxon>
        <taxon>Bacillati</taxon>
        <taxon>Actinomycetota</taxon>
        <taxon>Actinomycetes</taxon>
        <taxon>Micrococcales</taxon>
        <taxon>Micrococcaceae</taxon>
        <taxon>Micrococcus</taxon>
    </lineage>
</organism>